<reference key="1">
    <citation type="journal article" date="2012" name="Fungal Genet. Biol.">
        <title>Ribosomal biosynthesis of alpha-amanitin in Galerina marginata.</title>
        <authorList>
            <person name="Luo H."/>
            <person name="Hallen-Adams H.E."/>
            <person name="Scott-Craig J.S."/>
            <person name="Walton J.D."/>
        </authorList>
    </citation>
    <scope>NUCLEOTIDE SEQUENCE [MRNA]</scope>
    <scope>PROCESSING</scope>
    <scope>FUNCTION</scope>
</reference>
<reference key="2">
    <citation type="journal article" date="2014" name="Proc. Natl. Acad. Sci. U.S.A.">
        <title>Extensive sampling of basidiomycete genomes demonstrates inadequacy of the white-rot/brown-rot paradigm for wood decay fungi.</title>
        <authorList>
            <person name="Riley R."/>
            <person name="Salamov A.A."/>
            <person name="Brown D.W."/>
            <person name="Nagy L.G."/>
            <person name="Floudas D."/>
            <person name="Held B.W."/>
            <person name="Levasseur A."/>
            <person name="Lombard V."/>
            <person name="Morin E."/>
            <person name="Otillar R."/>
            <person name="Lindquist E.A."/>
            <person name="Sun H."/>
            <person name="LaButti K.M."/>
            <person name="Schmutz J."/>
            <person name="Jabbour D."/>
            <person name="Luo H."/>
            <person name="Baker S.E."/>
            <person name="Pisabarro A.G."/>
            <person name="Walton J.D."/>
            <person name="Blanchette R.A."/>
            <person name="Henrissat B."/>
            <person name="Martin F."/>
            <person name="Cullen D."/>
            <person name="Hibbett D.S."/>
            <person name="Grigoriev I.V."/>
        </authorList>
    </citation>
    <scope>NUCLEOTIDE SEQUENCE [LARGE SCALE GENOMIC DNA]</scope>
    <source>
        <strain>CBS 339.88</strain>
    </source>
</reference>
<reference key="3">
    <citation type="journal article" date="1995" name="J. Biol. Chem.">
        <title>Action of alpha-amanitin during pyrophosphorolysis and elongation by RNA polymerase II.</title>
        <authorList>
            <person name="Chafin D.R."/>
            <person name="Guo H."/>
            <person name="Price D.H."/>
        </authorList>
    </citation>
    <scope>FUNCTION</scope>
</reference>
<reference key="4">
    <citation type="journal article" date="1996" name="J. Biol. Chem.">
        <title>Amanitin greatly reduces the rate of transcription by RNA polymerase II ternary complexes but fails to inhibit some transcript cleavage modes.</title>
        <authorList>
            <person name="Rudd M.D."/>
            <person name="Luse D.S."/>
        </authorList>
    </citation>
    <scope>FUNCTION</scope>
</reference>
<reference key="5">
    <citation type="journal article" date="2002" name="J. Toxicol. Clin. Toxicol.">
        <title>Treatment of amatoxin poisoning: 20-year retrospective analysis.</title>
        <authorList>
            <person name="Enjalbert F."/>
            <person name="Rapior S."/>
            <person name="Nouguier-Soule J."/>
            <person name="Guillon S."/>
            <person name="Amouroux N."/>
            <person name="Cabot C."/>
        </authorList>
    </citation>
    <scope>REVIEW ON TOXICITY</scope>
</reference>
<comment type="function">
    <text evidence="4 5 10">Major toxin belonging to the bicyclic octapeptides amatoxins that acts by binding non-competitively to RNA polymerase II and greatly slowing the elongation of transcripts from target promoters (PubMed:22202811, PubMed:7642577, PubMed:8702941).</text>
</comment>
<comment type="PTM">
    <text evidence="1">Processed by the macrocyclase-peptidase enzyme POPB to yield a toxic bicyclic octapeptide (By similarity). POPB first removes 10 residues from the N-terminus (By similarity). Conformational trapping of the remaining peptide forces the enzyme to release this intermediate rather than proceed to macrocyclization (By similarity). The enzyme rebinds the remaining peptide in a different conformation and catalyzes macrocyclization of the N-terminal 8 residues (By similarity).</text>
</comment>
<comment type="miscellaneous">
    <text evidence="6">The typical symptoms of amatoxin poisoning are gastro-intestinal distress beginning 6-12 hours after ingestion, a remission phase lasting 12-24 hours, and progressive loss of liver function culminating in death within 3-5 days (PubMed:12475187). One of the few effective treatments is liver transplantation (PubMed:12475187).</text>
</comment>
<comment type="similarity">
    <text evidence="9">Belongs to the MSDIN fungal toxin family.</text>
</comment>
<comment type="sequence caution" evidence="9">
    <conflict type="erroneous gene model prediction">
        <sequence resource="EMBL-CDS" id="KDR86192"/>
    </conflict>
</comment>
<organism>
    <name type="scientific">Galerina marginata (strain CBS 339.88)</name>
    <dbReference type="NCBI Taxonomy" id="685588"/>
    <lineage>
        <taxon>Eukaryota</taxon>
        <taxon>Fungi</taxon>
        <taxon>Dikarya</taxon>
        <taxon>Basidiomycota</taxon>
        <taxon>Agaricomycotina</taxon>
        <taxon>Agaricomycetes</taxon>
        <taxon>Agaricomycetidae</taxon>
        <taxon>Agaricales</taxon>
        <taxon>Agaricineae</taxon>
        <taxon>Strophariaceae</taxon>
        <taxon>Galerina</taxon>
    </lineage>
</organism>
<dbReference type="EMBL" id="JN827312">
    <property type="protein sequence ID" value="AEX26936.1"/>
    <property type="molecule type" value="mRNA"/>
</dbReference>
<dbReference type="EMBL" id="KL142367">
    <property type="protein sequence ID" value="KDR86192.1"/>
    <property type="status" value="ALT_SEQ"/>
    <property type="molecule type" value="Genomic_DNA"/>
</dbReference>
<dbReference type="Proteomes" id="UP000027222">
    <property type="component" value="Unassembled WGS sequence"/>
</dbReference>
<dbReference type="GO" id="GO:0090729">
    <property type="term" value="F:toxin activity"/>
    <property type="evidence" value="ECO:0007669"/>
    <property type="project" value="UniProtKB-KW"/>
</dbReference>
<dbReference type="InterPro" id="IPR027582">
    <property type="entry name" value="Amanitin/phalloidin"/>
</dbReference>
<dbReference type="NCBIfam" id="TIGR04309">
    <property type="entry name" value="amanitin"/>
    <property type="match status" value="1"/>
</dbReference>
<dbReference type="Pfam" id="PF24112">
    <property type="entry name" value="Amanitin"/>
    <property type="match status" value="1"/>
</dbReference>
<protein>
    <recommendedName>
        <fullName evidence="7">Alpha-amanitin proprotein 2</fullName>
    </recommendedName>
    <component>
        <recommendedName>
            <fullName evidence="7">Alpha-amanitin</fullName>
        </recommendedName>
        <alternativeName>
            <fullName evidence="8">Amatoxin</fullName>
        </alternativeName>
        <alternativeName>
            <fullName evidence="3">Gamma-amanitin</fullName>
        </alternativeName>
    </component>
</protein>
<proteinExistence type="inferred from homology"/>
<sequence length="35" mass="3892">MFDTNSTRLPIWGIGCNPWTAEHVDQTLVSGNDIC</sequence>
<name>AAMA2_GALM3</name>
<keyword id="KW-0379">Hydroxylation</keyword>
<keyword id="KW-1185">Reference proteome</keyword>
<keyword id="KW-0883">Thioether bond</keyword>
<keyword id="KW-0800">Toxin</keyword>
<gene>
    <name evidence="7" type="primary">AMA1-2</name>
    <name type="ORF">GALMADRAFT_218055</name>
</gene>
<accession>H2E7Q6</accession>
<accession>A0A067TV11</accession>
<feature type="propeptide" id="PRO_0000443567" evidence="2">
    <location>
        <begin position="1"/>
        <end position="10"/>
    </location>
</feature>
<feature type="peptide" id="PRO_0000443568" description="Alpha-amanitin" evidence="2">
    <location>
        <begin position="11"/>
        <end position="18"/>
    </location>
</feature>
<feature type="propeptide" id="PRO_0000443569" evidence="2">
    <location>
        <begin position="19"/>
        <end position="35"/>
    </location>
</feature>
<feature type="modified residue" description="(3R,4R)-4,5-dihydroxyisoleucine; in form alpha-amanitin" evidence="3">
    <location>
        <position position="11"/>
    </location>
</feature>
<feature type="modified residue" description="(3R,4S)-4-hydroxyisoleucine; in form gamma-amanitin" evidence="3">
    <location>
        <position position="11"/>
    </location>
</feature>
<feature type="modified residue" description="4-hydroxyproline" evidence="3">
    <location>
        <position position="18"/>
    </location>
</feature>
<feature type="cross-link" description="Cyclopeptide (Ile-Pro)" evidence="3">
    <location>
        <begin position="11"/>
        <end position="18"/>
    </location>
</feature>
<feature type="cross-link" description="2'-cysteinyl-6'-hydroxytryptophan sulfoxide (Trp-Cys)" evidence="3">
    <location>
        <begin position="12"/>
        <end position="16"/>
    </location>
</feature>
<evidence type="ECO:0000250" key="1">
    <source>
        <dbReference type="UniProtKB" id="A0A067SLB9"/>
    </source>
</evidence>
<evidence type="ECO:0000250" key="2">
    <source>
        <dbReference type="UniProtKB" id="A8W7M4"/>
    </source>
</evidence>
<evidence type="ECO:0000250" key="3">
    <source>
        <dbReference type="UniProtKB" id="P85421"/>
    </source>
</evidence>
<evidence type="ECO:0000269" key="4">
    <source>
    </source>
</evidence>
<evidence type="ECO:0000269" key="5">
    <source>
    </source>
</evidence>
<evidence type="ECO:0000303" key="6">
    <source>
    </source>
</evidence>
<evidence type="ECO:0000303" key="7">
    <source>
    </source>
</evidence>
<evidence type="ECO:0000303" key="8">
    <source>
    </source>
</evidence>
<evidence type="ECO:0000305" key="9"/>
<evidence type="ECO:0000305" key="10">
    <source>
    </source>
</evidence>